<organism>
    <name type="scientific">Cupriavidus metallidurans (strain ATCC 43123 / DSM 2839 / NBRC 102507 / CH34)</name>
    <name type="common">Ralstonia metallidurans</name>
    <dbReference type="NCBI Taxonomy" id="266264"/>
    <lineage>
        <taxon>Bacteria</taxon>
        <taxon>Pseudomonadati</taxon>
        <taxon>Pseudomonadota</taxon>
        <taxon>Betaproteobacteria</taxon>
        <taxon>Burkholderiales</taxon>
        <taxon>Burkholderiaceae</taxon>
        <taxon>Cupriavidus</taxon>
    </lineage>
</organism>
<dbReference type="EMBL" id="CP000352">
    <property type="protein sequence ID" value="ABF07961.1"/>
    <property type="molecule type" value="Genomic_DNA"/>
</dbReference>
<dbReference type="SMR" id="Q1LPG5"/>
<dbReference type="STRING" id="266264.Rmet_1075"/>
<dbReference type="KEGG" id="rme:Rmet_1075"/>
<dbReference type="eggNOG" id="COG0249">
    <property type="taxonomic scope" value="Bacteria"/>
</dbReference>
<dbReference type="HOGENOM" id="CLU_002472_3_1_4"/>
<dbReference type="Proteomes" id="UP000002429">
    <property type="component" value="Chromosome"/>
</dbReference>
<dbReference type="GO" id="GO:0005829">
    <property type="term" value="C:cytosol"/>
    <property type="evidence" value="ECO:0007669"/>
    <property type="project" value="TreeGrafter"/>
</dbReference>
<dbReference type="GO" id="GO:0005524">
    <property type="term" value="F:ATP binding"/>
    <property type="evidence" value="ECO:0007669"/>
    <property type="project" value="UniProtKB-UniRule"/>
</dbReference>
<dbReference type="GO" id="GO:0140664">
    <property type="term" value="F:ATP-dependent DNA damage sensor activity"/>
    <property type="evidence" value="ECO:0007669"/>
    <property type="project" value="InterPro"/>
</dbReference>
<dbReference type="GO" id="GO:0003684">
    <property type="term" value="F:damaged DNA binding"/>
    <property type="evidence" value="ECO:0007669"/>
    <property type="project" value="UniProtKB-UniRule"/>
</dbReference>
<dbReference type="GO" id="GO:0030983">
    <property type="term" value="F:mismatched DNA binding"/>
    <property type="evidence" value="ECO:0007669"/>
    <property type="project" value="InterPro"/>
</dbReference>
<dbReference type="GO" id="GO:0006298">
    <property type="term" value="P:mismatch repair"/>
    <property type="evidence" value="ECO:0007669"/>
    <property type="project" value="UniProtKB-UniRule"/>
</dbReference>
<dbReference type="CDD" id="cd03284">
    <property type="entry name" value="ABC_MutS1"/>
    <property type="match status" value="1"/>
</dbReference>
<dbReference type="FunFam" id="1.10.1420.10:FF:000002">
    <property type="entry name" value="DNA mismatch repair protein MutS"/>
    <property type="match status" value="1"/>
</dbReference>
<dbReference type="FunFam" id="3.40.1170.10:FF:000001">
    <property type="entry name" value="DNA mismatch repair protein MutS"/>
    <property type="match status" value="1"/>
</dbReference>
<dbReference type="Gene3D" id="1.10.1420.10">
    <property type="match status" value="2"/>
</dbReference>
<dbReference type="Gene3D" id="6.10.140.430">
    <property type="match status" value="1"/>
</dbReference>
<dbReference type="Gene3D" id="3.40.1170.10">
    <property type="entry name" value="DNA repair protein MutS, domain I"/>
    <property type="match status" value="1"/>
</dbReference>
<dbReference type="Gene3D" id="3.30.420.110">
    <property type="entry name" value="MutS, connector domain"/>
    <property type="match status" value="1"/>
</dbReference>
<dbReference type="Gene3D" id="3.40.50.300">
    <property type="entry name" value="P-loop containing nucleotide triphosphate hydrolases"/>
    <property type="match status" value="1"/>
</dbReference>
<dbReference type="HAMAP" id="MF_00096">
    <property type="entry name" value="MutS"/>
    <property type="match status" value="1"/>
</dbReference>
<dbReference type="InterPro" id="IPR005748">
    <property type="entry name" value="DNA_mismatch_repair_MutS"/>
</dbReference>
<dbReference type="InterPro" id="IPR007695">
    <property type="entry name" value="DNA_mismatch_repair_MutS-lik_N"/>
</dbReference>
<dbReference type="InterPro" id="IPR017261">
    <property type="entry name" value="DNA_mismatch_repair_MutS/MSH"/>
</dbReference>
<dbReference type="InterPro" id="IPR000432">
    <property type="entry name" value="DNA_mismatch_repair_MutS_C"/>
</dbReference>
<dbReference type="InterPro" id="IPR007861">
    <property type="entry name" value="DNA_mismatch_repair_MutS_clamp"/>
</dbReference>
<dbReference type="InterPro" id="IPR007696">
    <property type="entry name" value="DNA_mismatch_repair_MutS_core"/>
</dbReference>
<dbReference type="InterPro" id="IPR016151">
    <property type="entry name" value="DNA_mismatch_repair_MutS_N"/>
</dbReference>
<dbReference type="InterPro" id="IPR036187">
    <property type="entry name" value="DNA_mismatch_repair_MutS_sf"/>
</dbReference>
<dbReference type="InterPro" id="IPR007860">
    <property type="entry name" value="DNA_mmatch_repair_MutS_con_dom"/>
</dbReference>
<dbReference type="InterPro" id="IPR045076">
    <property type="entry name" value="MutS"/>
</dbReference>
<dbReference type="InterPro" id="IPR036678">
    <property type="entry name" value="MutS_con_dom_sf"/>
</dbReference>
<dbReference type="InterPro" id="IPR027417">
    <property type="entry name" value="P-loop_NTPase"/>
</dbReference>
<dbReference type="NCBIfam" id="TIGR01070">
    <property type="entry name" value="mutS1"/>
    <property type="match status" value="1"/>
</dbReference>
<dbReference type="NCBIfam" id="NF003810">
    <property type="entry name" value="PRK05399.1"/>
    <property type="match status" value="1"/>
</dbReference>
<dbReference type="PANTHER" id="PTHR11361:SF34">
    <property type="entry name" value="DNA MISMATCH REPAIR PROTEIN MSH1, MITOCHONDRIAL"/>
    <property type="match status" value="1"/>
</dbReference>
<dbReference type="PANTHER" id="PTHR11361">
    <property type="entry name" value="DNA MISMATCH REPAIR PROTEIN MUTS FAMILY MEMBER"/>
    <property type="match status" value="1"/>
</dbReference>
<dbReference type="Pfam" id="PF01624">
    <property type="entry name" value="MutS_I"/>
    <property type="match status" value="1"/>
</dbReference>
<dbReference type="Pfam" id="PF05188">
    <property type="entry name" value="MutS_II"/>
    <property type="match status" value="1"/>
</dbReference>
<dbReference type="Pfam" id="PF05192">
    <property type="entry name" value="MutS_III"/>
    <property type="match status" value="1"/>
</dbReference>
<dbReference type="Pfam" id="PF05190">
    <property type="entry name" value="MutS_IV"/>
    <property type="match status" value="1"/>
</dbReference>
<dbReference type="Pfam" id="PF00488">
    <property type="entry name" value="MutS_V"/>
    <property type="match status" value="1"/>
</dbReference>
<dbReference type="PIRSF" id="PIRSF037677">
    <property type="entry name" value="DNA_mis_repair_Msh6"/>
    <property type="match status" value="1"/>
</dbReference>
<dbReference type="SMART" id="SM00534">
    <property type="entry name" value="MUTSac"/>
    <property type="match status" value="1"/>
</dbReference>
<dbReference type="SMART" id="SM00533">
    <property type="entry name" value="MUTSd"/>
    <property type="match status" value="1"/>
</dbReference>
<dbReference type="SUPFAM" id="SSF55271">
    <property type="entry name" value="DNA repair protein MutS, domain I"/>
    <property type="match status" value="1"/>
</dbReference>
<dbReference type="SUPFAM" id="SSF53150">
    <property type="entry name" value="DNA repair protein MutS, domain II"/>
    <property type="match status" value="1"/>
</dbReference>
<dbReference type="SUPFAM" id="SSF48334">
    <property type="entry name" value="DNA repair protein MutS, domain III"/>
    <property type="match status" value="1"/>
</dbReference>
<dbReference type="SUPFAM" id="SSF52540">
    <property type="entry name" value="P-loop containing nucleoside triphosphate hydrolases"/>
    <property type="match status" value="1"/>
</dbReference>
<dbReference type="PROSITE" id="PS00486">
    <property type="entry name" value="DNA_MISMATCH_REPAIR_2"/>
    <property type="match status" value="1"/>
</dbReference>
<sequence>MSEALSVPAAEGENTVTASESPDLAATSARAEKVGKQEKPEKAEKQSPMMLQYHRIKADHPDTLLFYRMGDFYELFHDDAEKAARLLDITLTARGQSGGVPIRMAGIPFHSADQYLARLVKLGESVAICEQIGDPATSKGPVERKVVRIVTPGTLTDAALLPDKSDTFLLAVHQQTTRRGVSKTGLAWLNLASGELRLMECDAAQLSRELERIRPAEVLYTDGMDLPTLTCARTRLPEWHFDQEAGTRRLREQIGVASLEPFGCSGLGAALGAAGALLNYAATTQGQSLRHVQGVTVERESEFVGLDSATRRNLELTETLRGTESPTLFSLLDTCATTMGSRALRHWLHHPLRDPALPRARQQAIGALITQGPDGLRAVLRKLADVERITARLALLSARPRDLSSLRDTLRALPDVQAATVSSEDAPLLAQTLEEIDIPQDCLELLIRAVADEPSTVIRDGGVIARGYDSELDELRDISENCGQFLIDLETRERERTGITNLRVEYNRVHGFYIEVTNGQADKVPDDYRRRQTLKNAERYITPELKAFEDKALSAQDRALAREKQLYDGLLQALLPHIGSLRRVAGALARLDVLATLAERAKTLDWVQPERVQENVIDISQGRHPVVEGQLAAESVAFIANDCQLNEARKLLLITGPNMGGKSTFMRQTALIVLLACVGAWVPARRAVIGPVDRIFTRIGAADDLAGGRSTFMVEMTEAAAILHNATPSSLVLMDEIGRGTSTFDGLALAWAIARHLLSHNRSHTLFATHYFELTQLPVEFPQAANVHLSAVEHGDGIVFLHAVQDGPASQSYGLQVAQLAGVPQPVIRAARKHLAWLEEQSADATPTPQMDLFSAQSSPSADDEDDKSAGQSAVPPAQAATLEALADIDPDSLSPREALEALYRLKSISETARTV</sequence>
<proteinExistence type="inferred from homology"/>
<accession>Q1LPG5</accession>
<name>MUTS_CUPMC</name>
<comment type="function">
    <text evidence="1">This protein is involved in the repair of mismatches in DNA. It is possible that it carries out the mismatch recognition step. This protein has a weak ATPase activity.</text>
</comment>
<comment type="similarity">
    <text evidence="1">Belongs to the DNA mismatch repair MutS family.</text>
</comment>
<keyword id="KW-0067">ATP-binding</keyword>
<keyword id="KW-0227">DNA damage</keyword>
<keyword id="KW-0234">DNA repair</keyword>
<keyword id="KW-0238">DNA-binding</keyword>
<keyword id="KW-0547">Nucleotide-binding</keyword>
<keyword id="KW-1185">Reference proteome</keyword>
<feature type="chain" id="PRO_0000335209" description="DNA mismatch repair protein MutS">
    <location>
        <begin position="1"/>
        <end position="916"/>
    </location>
</feature>
<feature type="region of interest" description="Disordered" evidence="2">
    <location>
        <begin position="1"/>
        <end position="47"/>
    </location>
</feature>
<feature type="region of interest" description="Disordered" evidence="2">
    <location>
        <begin position="843"/>
        <end position="880"/>
    </location>
</feature>
<feature type="compositionally biased region" description="Basic and acidic residues" evidence="2">
    <location>
        <begin position="30"/>
        <end position="45"/>
    </location>
</feature>
<feature type="compositionally biased region" description="Polar residues" evidence="2">
    <location>
        <begin position="843"/>
        <end position="861"/>
    </location>
</feature>
<feature type="binding site" evidence="1">
    <location>
        <begin position="656"/>
        <end position="663"/>
    </location>
    <ligand>
        <name>ATP</name>
        <dbReference type="ChEBI" id="CHEBI:30616"/>
    </ligand>
</feature>
<reference key="1">
    <citation type="journal article" date="2010" name="PLoS ONE">
        <title>The complete genome sequence of Cupriavidus metallidurans strain CH34, a master survivalist in harsh and anthropogenic environments.</title>
        <authorList>
            <person name="Janssen P.J."/>
            <person name="Van Houdt R."/>
            <person name="Moors H."/>
            <person name="Monsieurs P."/>
            <person name="Morin N."/>
            <person name="Michaux A."/>
            <person name="Benotmane M.A."/>
            <person name="Leys N."/>
            <person name="Vallaeys T."/>
            <person name="Lapidus A."/>
            <person name="Monchy S."/>
            <person name="Medigue C."/>
            <person name="Taghavi S."/>
            <person name="McCorkle S."/>
            <person name="Dunn J."/>
            <person name="van der Lelie D."/>
            <person name="Mergeay M."/>
        </authorList>
    </citation>
    <scope>NUCLEOTIDE SEQUENCE [LARGE SCALE GENOMIC DNA]</scope>
    <source>
        <strain>ATCC 43123 / DSM 2839 / NBRC 102507 / CH34</strain>
    </source>
</reference>
<protein>
    <recommendedName>
        <fullName evidence="1">DNA mismatch repair protein MutS</fullName>
    </recommendedName>
</protein>
<evidence type="ECO:0000255" key="1">
    <source>
        <dbReference type="HAMAP-Rule" id="MF_00096"/>
    </source>
</evidence>
<evidence type="ECO:0000256" key="2">
    <source>
        <dbReference type="SAM" id="MobiDB-lite"/>
    </source>
</evidence>
<gene>
    <name evidence="1" type="primary">mutS</name>
    <name type="ordered locus">Rmet_1075</name>
</gene>